<comment type="function">
    <text evidence="1">This protein is an aporepressor. When complexed with L-tryptophan it binds the operator region of the trp operon (5'-ACTAGT-'3') and prevents the initiation of transcription. The complex also regulates trp repressor biosynthesis by binding to its regulatory region (By similarity).</text>
</comment>
<comment type="subunit">
    <text evidence="1">Homodimer.</text>
</comment>
<comment type="subcellular location">
    <subcellularLocation>
        <location evidence="1">Cytoplasm</location>
    </subcellularLocation>
</comment>
<comment type="similarity">
    <text evidence="2">Belongs to the TrpR family.</text>
</comment>
<protein>
    <recommendedName>
        <fullName>Trp operon repressor</fullName>
    </recommendedName>
</protein>
<evidence type="ECO:0000250" key="1"/>
<evidence type="ECO:0000305" key="2"/>
<gene>
    <name type="primary">trpR</name>
    <name type="ordered locus">SF4425</name>
    <name type="ordered locus">S4696</name>
</gene>
<reference key="1">
    <citation type="journal article" date="2002" name="Nucleic Acids Res.">
        <title>Genome sequence of Shigella flexneri 2a: insights into pathogenicity through comparison with genomes of Escherichia coli K12 and O157.</title>
        <authorList>
            <person name="Jin Q."/>
            <person name="Yuan Z."/>
            <person name="Xu J."/>
            <person name="Wang Y."/>
            <person name="Shen Y."/>
            <person name="Lu W."/>
            <person name="Wang J."/>
            <person name="Liu H."/>
            <person name="Yang J."/>
            <person name="Yang F."/>
            <person name="Zhang X."/>
            <person name="Zhang J."/>
            <person name="Yang G."/>
            <person name="Wu H."/>
            <person name="Qu D."/>
            <person name="Dong J."/>
            <person name="Sun L."/>
            <person name="Xue Y."/>
            <person name="Zhao A."/>
            <person name="Gao Y."/>
            <person name="Zhu J."/>
            <person name="Kan B."/>
            <person name="Ding K."/>
            <person name="Chen S."/>
            <person name="Cheng H."/>
            <person name="Yao Z."/>
            <person name="He B."/>
            <person name="Chen R."/>
            <person name="Ma D."/>
            <person name="Qiang B."/>
            <person name="Wen Y."/>
            <person name="Hou Y."/>
            <person name="Yu J."/>
        </authorList>
    </citation>
    <scope>NUCLEOTIDE SEQUENCE [LARGE SCALE GENOMIC DNA]</scope>
    <source>
        <strain>301 / Serotype 2a</strain>
    </source>
</reference>
<reference key="2">
    <citation type="journal article" date="2003" name="Infect. Immun.">
        <title>Complete genome sequence and comparative genomics of Shigella flexneri serotype 2a strain 2457T.</title>
        <authorList>
            <person name="Wei J."/>
            <person name="Goldberg M.B."/>
            <person name="Burland V."/>
            <person name="Venkatesan M.M."/>
            <person name="Deng W."/>
            <person name="Fournier G."/>
            <person name="Mayhew G.F."/>
            <person name="Plunkett G. III"/>
            <person name="Rose D.J."/>
            <person name="Darling A."/>
            <person name="Mau B."/>
            <person name="Perna N.T."/>
            <person name="Payne S.M."/>
            <person name="Runyen-Janecky L.J."/>
            <person name="Zhou S."/>
            <person name="Schwartz D.C."/>
            <person name="Blattner F.R."/>
        </authorList>
    </citation>
    <scope>NUCLEOTIDE SEQUENCE [LARGE SCALE GENOMIC DNA]</scope>
    <source>
        <strain>ATCC 700930 / 2457T / Serotype 2a</strain>
    </source>
</reference>
<organism>
    <name type="scientific">Shigella flexneri</name>
    <dbReference type="NCBI Taxonomy" id="623"/>
    <lineage>
        <taxon>Bacteria</taxon>
        <taxon>Pseudomonadati</taxon>
        <taxon>Pseudomonadota</taxon>
        <taxon>Gammaproteobacteria</taxon>
        <taxon>Enterobacterales</taxon>
        <taxon>Enterobacteriaceae</taxon>
        <taxon>Shigella</taxon>
    </lineage>
</organism>
<accession>P0A883</accession>
<accession>P03032</accession>
<name>TRPR_SHIFL</name>
<dbReference type="EMBL" id="AE005674">
    <property type="protein sequence ID" value="AAN45839.1"/>
    <property type="molecule type" value="Genomic_DNA"/>
</dbReference>
<dbReference type="EMBL" id="AE014073">
    <property type="protein sequence ID" value="AAP19613.1"/>
    <property type="molecule type" value="Genomic_DNA"/>
</dbReference>
<dbReference type="RefSeq" id="NP_710132.1">
    <property type="nucleotide sequence ID" value="NC_004337.2"/>
</dbReference>
<dbReference type="RefSeq" id="WP_000068679.1">
    <property type="nucleotide sequence ID" value="NZ_WPGW01000013.1"/>
</dbReference>
<dbReference type="SMR" id="P0A883"/>
<dbReference type="STRING" id="198214.SF4425"/>
<dbReference type="PaxDb" id="198214-SF4425"/>
<dbReference type="GeneID" id="1025866"/>
<dbReference type="GeneID" id="93777452"/>
<dbReference type="KEGG" id="sfl:SF4425"/>
<dbReference type="KEGG" id="sfx:S4696"/>
<dbReference type="PATRIC" id="fig|198214.7.peg.5215"/>
<dbReference type="HOGENOM" id="CLU_147939_0_0_6"/>
<dbReference type="Proteomes" id="UP000001006">
    <property type="component" value="Chromosome"/>
</dbReference>
<dbReference type="Proteomes" id="UP000002673">
    <property type="component" value="Chromosome"/>
</dbReference>
<dbReference type="GO" id="GO:0005737">
    <property type="term" value="C:cytoplasm"/>
    <property type="evidence" value="ECO:0007669"/>
    <property type="project" value="UniProtKB-SubCell"/>
</dbReference>
<dbReference type="GO" id="GO:0003700">
    <property type="term" value="F:DNA-binding transcription factor activity"/>
    <property type="evidence" value="ECO:0007669"/>
    <property type="project" value="InterPro"/>
</dbReference>
<dbReference type="GO" id="GO:0043565">
    <property type="term" value="F:sequence-specific DNA binding"/>
    <property type="evidence" value="ECO:0007669"/>
    <property type="project" value="InterPro"/>
</dbReference>
<dbReference type="GO" id="GO:0045892">
    <property type="term" value="P:negative regulation of DNA-templated transcription"/>
    <property type="evidence" value="ECO:0007669"/>
    <property type="project" value="UniProtKB-UniRule"/>
</dbReference>
<dbReference type="FunFam" id="1.10.1270.10:FF:000001">
    <property type="entry name" value="Trp operon repressor"/>
    <property type="match status" value="1"/>
</dbReference>
<dbReference type="Gene3D" id="1.10.1270.10">
    <property type="entry name" value="TrpR-like"/>
    <property type="match status" value="1"/>
</dbReference>
<dbReference type="HAMAP" id="MF_00475">
    <property type="entry name" value="Trp_repressor"/>
    <property type="match status" value="1"/>
</dbReference>
<dbReference type="InterPro" id="IPR000831">
    <property type="entry name" value="Trp_repress"/>
</dbReference>
<dbReference type="InterPro" id="IPR013335">
    <property type="entry name" value="Trp_repress_bac"/>
</dbReference>
<dbReference type="InterPro" id="IPR010921">
    <property type="entry name" value="Trp_repressor/repl_initiator"/>
</dbReference>
<dbReference type="InterPro" id="IPR038116">
    <property type="entry name" value="TrpR-like_sf"/>
</dbReference>
<dbReference type="NCBIfam" id="TIGR01321">
    <property type="entry name" value="TrpR"/>
    <property type="match status" value="1"/>
</dbReference>
<dbReference type="PANTHER" id="PTHR38025">
    <property type="entry name" value="TRP OPERON REPRESSOR"/>
    <property type="match status" value="1"/>
</dbReference>
<dbReference type="PANTHER" id="PTHR38025:SF1">
    <property type="entry name" value="TRP OPERON REPRESSOR"/>
    <property type="match status" value="1"/>
</dbReference>
<dbReference type="Pfam" id="PF01371">
    <property type="entry name" value="Trp_repressor"/>
    <property type="match status" value="1"/>
</dbReference>
<dbReference type="PIRSF" id="PIRSF003196">
    <property type="entry name" value="Trp_repressor"/>
    <property type="match status" value="1"/>
</dbReference>
<dbReference type="SUPFAM" id="SSF48295">
    <property type="entry name" value="TrpR-like"/>
    <property type="match status" value="1"/>
</dbReference>
<feature type="initiator methionine" description="Removed" evidence="1">
    <location>
        <position position="1"/>
    </location>
</feature>
<feature type="chain" id="PRO_0000196504" description="Trp operon repressor">
    <location>
        <begin position="2"/>
        <end position="108"/>
    </location>
</feature>
<feature type="DNA-binding region" evidence="1">
    <location>
        <begin position="68"/>
        <end position="91"/>
    </location>
</feature>
<proteinExistence type="inferred from homology"/>
<sequence length="108" mass="12355">MAQQSPYSAAMAEQRHQEWLRFVDLLKNAYQNDLHLPLLNLMLTPDEREALGTRVRIVEELLRGEMSQRELKNELGAGIATITRGSNSLKAAPVELRQWLEEVLLKSD</sequence>
<keyword id="KW-0963">Cytoplasm</keyword>
<keyword id="KW-0238">DNA-binding</keyword>
<keyword id="KW-1185">Reference proteome</keyword>
<keyword id="KW-0678">Repressor</keyword>
<keyword id="KW-0804">Transcription</keyword>
<keyword id="KW-0805">Transcription regulation</keyword>